<name>RF3_ALIFM</name>
<comment type="function">
    <text evidence="1">Increases the formation of ribosomal termination complexes and stimulates activities of RF-1 and RF-2. It binds guanine nucleotides and has strong preference for UGA stop codons. It may interact directly with the ribosome. The stimulation of RF-1 and RF-2 is significantly reduced by GTP and GDP, but not by GMP.</text>
</comment>
<comment type="subcellular location">
    <subcellularLocation>
        <location evidence="1">Cytoplasm</location>
    </subcellularLocation>
</comment>
<comment type="similarity">
    <text evidence="1">Belongs to the TRAFAC class translation factor GTPase superfamily. Classic translation factor GTPase family. PrfC subfamily.</text>
</comment>
<accession>B5FA93</accession>
<evidence type="ECO:0000255" key="1">
    <source>
        <dbReference type="HAMAP-Rule" id="MF_00072"/>
    </source>
</evidence>
<keyword id="KW-0963">Cytoplasm</keyword>
<keyword id="KW-0342">GTP-binding</keyword>
<keyword id="KW-0547">Nucleotide-binding</keyword>
<keyword id="KW-0648">Protein biosynthesis</keyword>
<sequence>MSFLQEVGKRRTFAIISHPDAGKTTITEKVLLFGNAIQKAGTVKGRGSNQHAKSDWMEMEKERGISVTTSVMQFPFNDCLVNLLDTPGHEDFSEDTYRTLTAVDSCLMVIDAAKGVEDRTRKLMEVTRLRDTPIVTFMNKLDREVRDPMEVLDEVESELGMACAPISWPIGCGKEFKGVYHIHRDETILYESGHGHEIQEVRTIKGLDNPELDAAVGSDLAESVREELELVMGACPEFDHELFLAGELTPVYFGTALGNFGVDHMLEGLTDWAPAPQTRQANERDVVATEDKFSGFVFKIQANMDPKHRDRIAFMRIVSGTYTQGMKMNHVRTGKNVSISDAVTFMAGDRSRAETAYAGDIIGLHNHGTIQIGDTFTQGESLKFSGIPNFAPELFRRIRLKDPLKQKQLLKGLVQLSEEGAVQVFRPLQNNDLIVGAVGVLQFDVVVARLKAEYNVEAIYEGVSVATARWVDCTDGKKMDEFQRKNQANLALDGGDNLTYIAPTMVNLNLASERFPDVQFRATREH</sequence>
<reference key="1">
    <citation type="submission" date="2008-08" db="EMBL/GenBank/DDBJ databases">
        <title>Complete sequence of Vibrio fischeri strain MJ11.</title>
        <authorList>
            <person name="Mandel M.J."/>
            <person name="Stabb E.V."/>
            <person name="Ruby E.G."/>
            <person name="Ferriera S."/>
            <person name="Johnson J."/>
            <person name="Kravitz S."/>
            <person name="Beeson K."/>
            <person name="Sutton G."/>
            <person name="Rogers Y.-H."/>
            <person name="Friedman R."/>
            <person name="Frazier M."/>
            <person name="Venter J.C."/>
        </authorList>
    </citation>
    <scope>NUCLEOTIDE SEQUENCE [LARGE SCALE GENOMIC DNA]</scope>
    <source>
        <strain>MJ11</strain>
    </source>
</reference>
<organism>
    <name type="scientific">Aliivibrio fischeri (strain MJ11)</name>
    <name type="common">Vibrio fischeri</name>
    <dbReference type="NCBI Taxonomy" id="388396"/>
    <lineage>
        <taxon>Bacteria</taxon>
        <taxon>Pseudomonadati</taxon>
        <taxon>Pseudomonadota</taxon>
        <taxon>Gammaproteobacteria</taxon>
        <taxon>Vibrionales</taxon>
        <taxon>Vibrionaceae</taxon>
        <taxon>Aliivibrio</taxon>
    </lineage>
</organism>
<proteinExistence type="inferred from homology"/>
<dbReference type="EMBL" id="CP001139">
    <property type="protein sequence ID" value="ACH67287.1"/>
    <property type="molecule type" value="Genomic_DNA"/>
</dbReference>
<dbReference type="RefSeq" id="WP_005417703.1">
    <property type="nucleotide sequence ID" value="NC_011184.1"/>
</dbReference>
<dbReference type="SMR" id="B5FA93"/>
<dbReference type="KEGG" id="vfm:VFMJ11_0501"/>
<dbReference type="HOGENOM" id="CLU_002794_2_1_6"/>
<dbReference type="Proteomes" id="UP000001857">
    <property type="component" value="Chromosome I"/>
</dbReference>
<dbReference type="GO" id="GO:0005829">
    <property type="term" value="C:cytosol"/>
    <property type="evidence" value="ECO:0007669"/>
    <property type="project" value="TreeGrafter"/>
</dbReference>
<dbReference type="GO" id="GO:0005525">
    <property type="term" value="F:GTP binding"/>
    <property type="evidence" value="ECO:0007669"/>
    <property type="project" value="UniProtKB-UniRule"/>
</dbReference>
<dbReference type="GO" id="GO:0003924">
    <property type="term" value="F:GTPase activity"/>
    <property type="evidence" value="ECO:0007669"/>
    <property type="project" value="InterPro"/>
</dbReference>
<dbReference type="GO" id="GO:0097216">
    <property type="term" value="F:guanosine tetraphosphate binding"/>
    <property type="evidence" value="ECO:0007669"/>
    <property type="project" value="UniProtKB-ARBA"/>
</dbReference>
<dbReference type="GO" id="GO:0016150">
    <property type="term" value="F:translation release factor activity, codon nonspecific"/>
    <property type="evidence" value="ECO:0007669"/>
    <property type="project" value="TreeGrafter"/>
</dbReference>
<dbReference type="GO" id="GO:0016149">
    <property type="term" value="F:translation release factor activity, codon specific"/>
    <property type="evidence" value="ECO:0007669"/>
    <property type="project" value="UniProtKB-UniRule"/>
</dbReference>
<dbReference type="GO" id="GO:0006449">
    <property type="term" value="P:regulation of translational termination"/>
    <property type="evidence" value="ECO:0007669"/>
    <property type="project" value="UniProtKB-UniRule"/>
</dbReference>
<dbReference type="CDD" id="cd04169">
    <property type="entry name" value="RF3"/>
    <property type="match status" value="1"/>
</dbReference>
<dbReference type="CDD" id="cd03689">
    <property type="entry name" value="RF3_II"/>
    <property type="match status" value="1"/>
</dbReference>
<dbReference type="CDD" id="cd16259">
    <property type="entry name" value="RF3_III"/>
    <property type="match status" value="1"/>
</dbReference>
<dbReference type="FunFam" id="2.40.30.10:FF:000040">
    <property type="entry name" value="Peptide chain release factor 3"/>
    <property type="match status" value="1"/>
</dbReference>
<dbReference type="FunFam" id="3.30.70.3280:FF:000001">
    <property type="entry name" value="Peptide chain release factor 3"/>
    <property type="match status" value="1"/>
</dbReference>
<dbReference type="FunFam" id="3.40.50.300:FF:000542">
    <property type="entry name" value="Peptide chain release factor 3"/>
    <property type="match status" value="1"/>
</dbReference>
<dbReference type="Gene3D" id="3.40.50.300">
    <property type="entry name" value="P-loop containing nucleotide triphosphate hydrolases"/>
    <property type="match status" value="3"/>
</dbReference>
<dbReference type="Gene3D" id="3.30.70.3280">
    <property type="entry name" value="Peptide chain release factor 3, domain III"/>
    <property type="match status" value="1"/>
</dbReference>
<dbReference type="HAMAP" id="MF_00072">
    <property type="entry name" value="Rel_fac_3"/>
    <property type="match status" value="1"/>
</dbReference>
<dbReference type="InterPro" id="IPR053905">
    <property type="entry name" value="EF-G-like_DII"/>
</dbReference>
<dbReference type="InterPro" id="IPR035647">
    <property type="entry name" value="EFG_III/V"/>
</dbReference>
<dbReference type="InterPro" id="IPR031157">
    <property type="entry name" value="G_TR_CS"/>
</dbReference>
<dbReference type="InterPro" id="IPR027417">
    <property type="entry name" value="P-loop_NTPase"/>
</dbReference>
<dbReference type="InterPro" id="IPR004548">
    <property type="entry name" value="PrfC"/>
</dbReference>
<dbReference type="InterPro" id="IPR032090">
    <property type="entry name" value="RF3_C"/>
</dbReference>
<dbReference type="InterPro" id="IPR038467">
    <property type="entry name" value="RF3_dom_3_sf"/>
</dbReference>
<dbReference type="InterPro" id="IPR041732">
    <property type="entry name" value="RF3_GTP-bd"/>
</dbReference>
<dbReference type="InterPro" id="IPR005225">
    <property type="entry name" value="Small_GTP-bd"/>
</dbReference>
<dbReference type="InterPro" id="IPR000795">
    <property type="entry name" value="T_Tr_GTP-bd_dom"/>
</dbReference>
<dbReference type="InterPro" id="IPR009000">
    <property type="entry name" value="Transl_B-barrel_sf"/>
</dbReference>
<dbReference type="NCBIfam" id="TIGR00503">
    <property type="entry name" value="prfC"/>
    <property type="match status" value="1"/>
</dbReference>
<dbReference type="NCBIfam" id="NF001964">
    <property type="entry name" value="PRK00741.1"/>
    <property type="match status" value="1"/>
</dbReference>
<dbReference type="NCBIfam" id="TIGR00231">
    <property type="entry name" value="small_GTP"/>
    <property type="match status" value="1"/>
</dbReference>
<dbReference type="PANTHER" id="PTHR43556">
    <property type="entry name" value="PEPTIDE CHAIN RELEASE FACTOR RF3"/>
    <property type="match status" value="1"/>
</dbReference>
<dbReference type="PANTHER" id="PTHR43556:SF2">
    <property type="entry name" value="PEPTIDE CHAIN RELEASE FACTOR RF3"/>
    <property type="match status" value="1"/>
</dbReference>
<dbReference type="Pfam" id="PF22042">
    <property type="entry name" value="EF-G_D2"/>
    <property type="match status" value="1"/>
</dbReference>
<dbReference type="Pfam" id="PF00009">
    <property type="entry name" value="GTP_EFTU"/>
    <property type="match status" value="1"/>
</dbReference>
<dbReference type="Pfam" id="PF16658">
    <property type="entry name" value="RF3_C"/>
    <property type="match status" value="1"/>
</dbReference>
<dbReference type="PRINTS" id="PR00315">
    <property type="entry name" value="ELONGATNFCT"/>
</dbReference>
<dbReference type="SUPFAM" id="SSF54980">
    <property type="entry name" value="EF-G C-terminal domain-like"/>
    <property type="match status" value="1"/>
</dbReference>
<dbReference type="SUPFAM" id="SSF52540">
    <property type="entry name" value="P-loop containing nucleoside triphosphate hydrolases"/>
    <property type="match status" value="1"/>
</dbReference>
<dbReference type="SUPFAM" id="SSF50447">
    <property type="entry name" value="Translation proteins"/>
    <property type="match status" value="1"/>
</dbReference>
<dbReference type="PROSITE" id="PS00301">
    <property type="entry name" value="G_TR_1"/>
    <property type="match status" value="1"/>
</dbReference>
<dbReference type="PROSITE" id="PS51722">
    <property type="entry name" value="G_TR_2"/>
    <property type="match status" value="1"/>
</dbReference>
<gene>
    <name evidence="1" type="primary">prfC</name>
    <name type="ordered locus">VFMJ11_0501</name>
</gene>
<protein>
    <recommendedName>
        <fullName evidence="1">Peptide chain release factor 3</fullName>
        <shortName evidence="1">RF-3</shortName>
    </recommendedName>
</protein>
<feature type="chain" id="PRO_1000092509" description="Peptide chain release factor 3">
    <location>
        <begin position="1"/>
        <end position="526"/>
    </location>
</feature>
<feature type="domain" description="tr-type G">
    <location>
        <begin position="8"/>
        <end position="277"/>
    </location>
</feature>
<feature type="binding site" evidence="1">
    <location>
        <begin position="17"/>
        <end position="24"/>
    </location>
    <ligand>
        <name>GTP</name>
        <dbReference type="ChEBI" id="CHEBI:37565"/>
    </ligand>
</feature>
<feature type="binding site" evidence="1">
    <location>
        <begin position="85"/>
        <end position="89"/>
    </location>
    <ligand>
        <name>GTP</name>
        <dbReference type="ChEBI" id="CHEBI:37565"/>
    </ligand>
</feature>
<feature type="binding site" evidence="1">
    <location>
        <begin position="139"/>
        <end position="142"/>
    </location>
    <ligand>
        <name>GTP</name>
        <dbReference type="ChEBI" id="CHEBI:37565"/>
    </ligand>
</feature>